<gene>
    <name evidence="1" type="primary">kdsA</name>
    <name type="ordered locus">HPP12_0003</name>
</gene>
<keyword id="KW-0963">Cytoplasm</keyword>
<keyword id="KW-0448">Lipopolysaccharide biosynthesis</keyword>
<keyword id="KW-0808">Transferase</keyword>
<feature type="chain" id="PRO_1000091819" description="2-dehydro-3-deoxyphosphooctonate aldolase">
    <location>
        <begin position="1"/>
        <end position="276"/>
    </location>
</feature>
<dbReference type="EC" id="2.5.1.55" evidence="1"/>
<dbReference type="EMBL" id="CP001217">
    <property type="protein sequence ID" value="ACJ07163.1"/>
    <property type="molecule type" value="Genomic_DNA"/>
</dbReference>
<dbReference type="SMR" id="B6JPA2"/>
<dbReference type="KEGG" id="hpp:HPP12_0003"/>
<dbReference type="HOGENOM" id="CLU_036666_0_0_7"/>
<dbReference type="UniPathway" id="UPA00030"/>
<dbReference type="UniPathway" id="UPA00357">
    <property type="reaction ID" value="UER00474"/>
</dbReference>
<dbReference type="Proteomes" id="UP000008198">
    <property type="component" value="Chromosome"/>
</dbReference>
<dbReference type="GO" id="GO:0005737">
    <property type="term" value="C:cytoplasm"/>
    <property type="evidence" value="ECO:0007669"/>
    <property type="project" value="UniProtKB-SubCell"/>
</dbReference>
<dbReference type="GO" id="GO:0008676">
    <property type="term" value="F:3-deoxy-8-phosphooctulonate synthase activity"/>
    <property type="evidence" value="ECO:0007669"/>
    <property type="project" value="UniProtKB-UniRule"/>
</dbReference>
<dbReference type="GO" id="GO:0019294">
    <property type="term" value="P:keto-3-deoxy-D-manno-octulosonic acid biosynthetic process"/>
    <property type="evidence" value="ECO:0007669"/>
    <property type="project" value="UniProtKB-UniRule"/>
</dbReference>
<dbReference type="Gene3D" id="3.20.20.70">
    <property type="entry name" value="Aldolase class I"/>
    <property type="match status" value="1"/>
</dbReference>
<dbReference type="HAMAP" id="MF_00056">
    <property type="entry name" value="KDO8P_synth"/>
    <property type="match status" value="1"/>
</dbReference>
<dbReference type="InterPro" id="IPR013785">
    <property type="entry name" value="Aldolase_TIM"/>
</dbReference>
<dbReference type="InterPro" id="IPR006218">
    <property type="entry name" value="DAHP1/KDSA"/>
</dbReference>
<dbReference type="InterPro" id="IPR006269">
    <property type="entry name" value="KDO8P_synthase"/>
</dbReference>
<dbReference type="NCBIfam" id="TIGR01362">
    <property type="entry name" value="KDO8P_synth"/>
    <property type="match status" value="1"/>
</dbReference>
<dbReference type="NCBIfam" id="NF003543">
    <property type="entry name" value="PRK05198.1"/>
    <property type="match status" value="1"/>
</dbReference>
<dbReference type="PANTHER" id="PTHR21057">
    <property type="entry name" value="PHOSPHO-2-DEHYDRO-3-DEOXYHEPTONATE ALDOLASE"/>
    <property type="match status" value="1"/>
</dbReference>
<dbReference type="Pfam" id="PF00793">
    <property type="entry name" value="DAHP_synth_1"/>
    <property type="match status" value="1"/>
</dbReference>
<dbReference type="SUPFAM" id="SSF51569">
    <property type="entry name" value="Aldolase"/>
    <property type="match status" value="1"/>
</dbReference>
<reference key="1">
    <citation type="submission" date="2008-10" db="EMBL/GenBank/DDBJ databases">
        <title>The complete genome sequence of Helicobacter pylori strain P12.</title>
        <authorList>
            <person name="Fischer W."/>
            <person name="Windhager L."/>
            <person name="Karnholz A."/>
            <person name="Zeiller M."/>
            <person name="Zimmer R."/>
            <person name="Haas R."/>
        </authorList>
    </citation>
    <scope>NUCLEOTIDE SEQUENCE [LARGE SCALE GENOMIC DNA]</scope>
    <source>
        <strain>P12</strain>
    </source>
</reference>
<protein>
    <recommendedName>
        <fullName evidence="1">2-dehydro-3-deoxyphosphooctonate aldolase</fullName>
        <ecNumber evidence="1">2.5.1.55</ecNumber>
    </recommendedName>
    <alternativeName>
        <fullName evidence="1">3-deoxy-D-manno-octulosonic acid 8-phosphate synthase</fullName>
    </alternativeName>
    <alternativeName>
        <fullName evidence="1">KDO-8-phosphate synthase</fullName>
        <shortName evidence="1">KDO 8-P synthase</shortName>
        <shortName evidence="1">KDOPS</shortName>
    </alternativeName>
    <alternativeName>
        <fullName evidence="1">Phospho-2-dehydro-3-deoxyoctonate aldolase</fullName>
    </alternativeName>
</protein>
<organism>
    <name type="scientific">Helicobacter pylori (strain P12)</name>
    <dbReference type="NCBI Taxonomy" id="570508"/>
    <lineage>
        <taxon>Bacteria</taxon>
        <taxon>Pseudomonadati</taxon>
        <taxon>Campylobacterota</taxon>
        <taxon>Epsilonproteobacteria</taxon>
        <taxon>Campylobacterales</taxon>
        <taxon>Helicobacteraceae</taxon>
        <taxon>Helicobacter</taxon>
    </lineage>
</organism>
<accession>B6JPA2</accession>
<evidence type="ECO:0000255" key="1">
    <source>
        <dbReference type="HAMAP-Rule" id="MF_00056"/>
    </source>
</evidence>
<proteinExistence type="inferred from homology"/>
<name>KDSA_HELP2</name>
<comment type="catalytic activity">
    <reaction evidence="1">
        <text>D-arabinose 5-phosphate + phosphoenolpyruvate + H2O = 3-deoxy-alpha-D-manno-2-octulosonate-8-phosphate + phosphate</text>
        <dbReference type="Rhea" id="RHEA:14053"/>
        <dbReference type="ChEBI" id="CHEBI:15377"/>
        <dbReference type="ChEBI" id="CHEBI:43474"/>
        <dbReference type="ChEBI" id="CHEBI:57693"/>
        <dbReference type="ChEBI" id="CHEBI:58702"/>
        <dbReference type="ChEBI" id="CHEBI:85985"/>
        <dbReference type="EC" id="2.5.1.55"/>
    </reaction>
</comment>
<comment type="pathway">
    <text evidence="1">Carbohydrate biosynthesis; 3-deoxy-D-manno-octulosonate biosynthesis; 3-deoxy-D-manno-octulosonate from D-ribulose 5-phosphate: step 2/3.</text>
</comment>
<comment type="pathway">
    <text evidence="1">Bacterial outer membrane biogenesis; lipopolysaccharide biosynthesis.</text>
</comment>
<comment type="subcellular location">
    <subcellularLocation>
        <location evidence="1">Cytoplasm</location>
    </subcellularLocation>
</comment>
<comment type="similarity">
    <text evidence="1">Belongs to the KdsA family.</text>
</comment>
<sequence length="276" mass="30194">MKTSNTKTPKPVLIAGPCVIESLENLRSIAIKLQPLANNERLDFYFKASFDKANRTSLESYRGPGLEKGLEMLQTIKDEFGYKILTDVHESYQASVAAKVADILQIPAFLCRQTDLIVAVSQTDAIVNIKKGQFMNPKDMQYSVLKALKTRDSSIQSPAYETALKNGVWLCERGSSFGYGNLVVDMRSLTIMREFAPVIFDATHSVQMPGGANGKSSGDSSFAPILARAAAAVGIDGLFAETHVDPKNALSDGANMLKPDELEHLVTDMLKIQNLF</sequence>